<sequence>MADLSLADALTEPSPDIEGEIKRDFIATLEAEAFDDVVGETVGKTDYIPLLDVDEKTGNSESKKKPCSETSQIEDTPSSKPTLLANGGHGVEGSDTTGSPTEFLEEKMAYQEYPNSQNWPEDTNFCFQPEQVVDPIQTDPFKMYHDDDLADLVFPSSATADTSIFAGQNDPLKDSYGMSPCNTAVVPQGWSVEALNSPHSESFVSPEAVAEPPQPTAVPLELAKEIEMASEERPPAQALEIMMGLKTTDMAPSKETEMALAKDMALATKTEVALAKDMESPTKLDVTLAKDMQPSMESDMALVKDMELPTEKEVALVKDVRWPTETDVSSAKNVVLPTETEVAPAKDVTLLKETERASPIKMDLAPSKDMGPPKENKKETERASPIKMDLAPSKDMGPPKENKIVPAKDLVLLSEIEVAQANDIISSTEISSAEKVALSSETEVALARDMTLPPETNVILTKDKALPLEAEVAPVKDMAQLPETEIAPAKDVAPSTVKEVGLLKDMSPLSETEMALGKDVTPPPETEVVLIKNVCLPPEMEVALTEDQVPALKTEAPLAKDGVLTLANNVTPAKDVPPLSETEATPVPIKDMEIAQTQKGISEDSHLESLQDVGQSAAPTFMISPETVTGTGKKCSLPAEEDSVLEKLGERKPCNSQPSELSSETSGIARPEEGRPVVSGTGNDITTPPNKELPPSPEKKTKPLATTQPAKTSTSKAKTQPTSLPKQPAPTTIGGLNKKPMSLASGLVPAAPPKRPAVASARPSILPSKDVKPKPIADAKAPEKRASPSKPASAPASRSGSKSTQTVAKTTTAAAVASTGPSSRSPSTLLPKKPTAIKTEGKPAEVKKMTAKSVPADLSRPKSTSTSSMKKTTTLSGTAPAAGVVPSRVKATPMPSRPSTTPFIDKKPTSAKPSSTTPRLSRLATNTSAPDLKNVRSKVGSTENIKHQPGGGRAKVEKKTEAAATTRKPESNAVTKTAGPIASAQKQPAGKVQIVSKKVSYSHIQSKCGSKDNIKHVPGGGNVQIQNKKVDISKVSSKCGSKANIKHKPGGGDVKIESQKLNFKEKAQAKVGSLDNVGHLPAGGAVKTEGGGSEAPLCPGPPAGEEPAISEAAPEAGAPTSASGLNGHPTLSGGGDQREAQTLDSQIQETSI</sequence>
<evidence type="ECO:0000250" key="1"/>
<evidence type="ECO:0000250" key="2">
    <source>
        <dbReference type="UniProtKB" id="P27546"/>
    </source>
</evidence>
<evidence type="ECO:0000256" key="3">
    <source>
        <dbReference type="SAM" id="MobiDB-lite"/>
    </source>
</evidence>
<evidence type="ECO:0000269" key="4">
    <source>
    </source>
</evidence>
<evidence type="ECO:0000269" key="5">
    <source>
    </source>
</evidence>
<evidence type="ECO:0000269" key="6">
    <source>
    </source>
</evidence>
<evidence type="ECO:0000269" key="7">
    <source>
    </source>
</evidence>
<evidence type="ECO:0000269" key="8">
    <source>
    </source>
</evidence>
<evidence type="ECO:0000269" key="9">
    <source ref="8"/>
</evidence>
<evidence type="ECO:0000303" key="10">
    <source>
    </source>
</evidence>
<evidence type="ECO:0000303" key="11">
    <source>
    </source>
</evidence>
<evidence type="ECO:0000303" key="12">
    <source>
    </source>
</evidence>
<evidence type="ECO:0000303" key="13">
    <source ref="4"/>
</evidence>
<evidence type="ECO:0000305" key="14"/>
<evidence type="ECO:0007744" key="15">
    <source>
    </source>
</evidence>
<evidence type="ECO:0007744" key="16">
    <source>
    </source>
</evidence>
<evidence type="ECO:0007744" key="17">
    <source>
    </source>
</evidence>
<evidence type="ECO:0007744" key="18">
    <source>
    </source>
</evidence>
<evidence type="ECO:0007744" key="19">
    <source>
    </source>
</evidence>
<evidence type="ECO:0007744" key="20">
    <source>
    </source>
</evidence>
<evidence type="ECO:0007744" key="21">
    <source>
    </source>
</evidence>
<evidence type="ECO:0007744" key="22">
    <source>
    </source>
</evidence>
<evidence type="ECO:0007744" key="23">
    <source>
    </source>
</evidence>
<evidence type="ECO:0007744" key="24">
    <source>
    </source>
</evidence>
<evidence type="ECO:0007744" key="25">
    <source>
    </source>
</evidence>
<evidence type="ECO:0007744" key="26">
    <source>
    </source>
</evidence>
<evidence type="ECO:0007744" key="27">
    <source>
    </source>
</evidence>
<evidence type="ECO:0007744" key="28">
    <source>
    </source>
</evidence>
<evidence type="ECO:0007744" key="29">
    <source>
    </source>
</evidence>
<dbReference type="EMBL" id="M64571">
    <property type="protein sequence ID" value="AAA59553.1"/>
    <property type="molecule type" value="mRNA"/>
</dbReference>
<dbReference type="EMBL" id="U19727">
    <property type="protein sequence ID" value="AAA67361.1"/>
    <property type="molecule type" value="mRNA"/>
</dbReference>
<dbReference type="EMBL" id="AK054696">
    <property type="protein sequence ID" value="BAB70795.1"/>
    <property type="molecule type" value="mRNA"/>
</dbReference>
<dbReference type="EMBL" id="AK125245">
    <property type="protein sequence ID" value="BAC86099.1"/>
    <property type="molecule type" value="mRNA"/>
</dbReference>
<dbReference type="EMBL" id="AB209377">
    <property type="protein sequence ID" value="BAD92614.1"/>
    <property type="status" value="ALT_INIT"/>
    <property type="molecule type" value="mRNA"/>
</dbReference>
<dbReference type="EMBL" id="AC124916">
    <property type="status" value="NOT_ANNOTATED_CDS"/>
    <property type="molecule type" value="Genomic_DNA"/>
</dbReference>
<dbReference type="EMBL" id="AC139667">
    <property type="status" value="NOT_ANNOTATED_CDS"/>
    <property type="molecule type" value="Genomic_DNA"/>
</dbReference>
<dbReference type="EMBL" id="CH471055">
    <property type="protein sequence ID" value="EAW64839.1"/>
    <property type="molecule type" value="Genomic_DNA"/>
</dbReference>
<dbReference type="EMBL" id="BC008715">
    <property type="protein sequence ID" value="AAH08715.1"/>
    <property type="molecule type" value="mRNA"/>
</dbReference>
<dbReference type="EMBL" id="BC012794">
    <property type="protein sequence ID" value="AAH12794.1"/>
    <property type="molecule type" value="mRNA"/>
</dbReference>
<dbReference type="EMBL" id="BC015149">
    <property type="protein sequence ID" value="AAH15149.1"/>
    <property type="molecule type" value="mRNA"/>
</dbReference>
<dbReference type="EMBL" id="BC051843">
    <property type="protein sequence ID" value="AAH51843.1"/>
    <property type="molecule type" value="mRNA"/>
</dbReference>
<dbReference type="EMBL" id="CR749544">
    <property type="protein sequence ID" value="CAH18346.1"/>
    <property type="molecule type" value="mRNA"/>
</dbReference>
<dbReference type="CCDS" id="CCDS33750.1">
    <molecule id="P27816-1"/>
</dbReference>
<dbReference type="CCDS" id="CCDS46818.1">
    <molecule id="P27816-6"/>
</dbReference>
<dbReference type="CCDS" id="CCDS46821.1">
    <molecule id="P27816-7"/>
</dbReference>
<dbReference type="PIR" id="A41206">
    <property type="entry name" value="A33183"/>
</dbReference>
<dbReference type="RefSeq" id="NP_001127836.1">
    <molecule id="P27816-6"/>
    <property type="nucleotide sequence ID" value="NM_001134364.2"/>
</dbReference>
<dbReference type="RefSeq" id="NP_001371658.1">
    <molecule id="P27816-1"/>
    <property type="nucleotide sequence ID" value="NM_001384729.1"/>
</dbReference>
<dbReference type="RefSeq" id="NP_002366.2">
    <molecule id="P27816-1"/>
    <property type="nucleotide sequence ID" value="NM_002375.4"/>
</dbReference>
<dbReference type="RefSeq" id="NP_112147.2">
    <molecule id="P27816-7"/>
    <property type="nucleotide sequence ID" value="NM_030885.3"/>
</dbReference>
<dbReference type="BMRB" id="P27816"/>
<dbReference type="BioGRID" id="110306">
    <property type="interactions" value="320"/>
</dbReference>
<dbReference type="FunCoup" id="P27816">
    <property type="interactions" value="703"/>
</dbReference>
<dbReference type="IntAct" id="P27816">
    <property type="interactions" value="126"/>
</dbReference>
<dbReference type="MINT" id="P27816"/>
<dbReference type="STRING" id="9606.ENSP00000353375"/>
<dbReference type="DrugBank" id="DB11638">
    <property type="generic name" value="Artenimol"/>
</dbReference>
<dbReference type="GlyCosmos" id="P27816">
    <property type="glycosylation" value="6 sites, 2 glycans"/>
</dbReference>
<dbReference type="GlyGen" id="P27816">
    <property type="glycosylation" value="29 sites, 1 N-linked glycan (1 site), 2 O-linked glycans (26 sites)"/>
</dbReference>
<dbReference type="iPTMnet" id="P27816"/>
<dbReference type="MetOSite" id="P27816"/>
<dbReference type="PhosphoSitePlus" id="P27816"/>
<dbReference type="SwissPalm" id="P27816"/>
<dbReference type="BioMuta" id="MAP4"/>
<dbReference type="DMDM" id="269849673"/>
<dbReference type="jPOST" id="P27816"/>
<dbReference type="MassIVE" id="P27816"/>
<dbReference type="PaxDb" id="9606-ENSP00000353375"/>
<dbReference type="PeptideAtlas" id="P27816"/>
<dbReference type="ProteomicsDB" id="54418">
    <molecule id="P27816-1"/>
</dbReference>
<dbReference type="ProteomicsDB" id="54419">
    <molecule id="P27816-2"/>
</dbReference>
<dbReference type="ProteomicsDB" id="54420">
    <molecule id="P27816-3"/>
</dbReference>
<dbReference type="ProteomicsDB" id="54421">
    <molecule id="P27816-4"/>
</dbReference>
<dbReference type="ProteomicsDB" id="54422">
    <molecule id="P27816-5"/>
</dbReference>
<dbReference type="ProteomicsDB" id="54423">
    <molecule id="P27816-6"/>
</dbReference>
<dbReference type="ProteomicsDB" id="54424">
    <molecule id="P27816-7"/>
</dbReference>
<dbReference type="Pumba" id="P27816"/>
<dbReference type="Antibodypedia" id="29982">
    <property type="antibodies" value="374 antibodies from 29 providers"/>
</dbReference>
<dbReference type="DNASU" id="4134"/>
<dbReference type="Ensembl" id="ENST00000360240.10">
    <molecule id="P27816-1"/>
    <property type="protein sequence ID" value="ENSP00000353375.6"/>
    <property type="gene ID" value="ENSG00000047849.22"/>
</dbReference>
<dbReference type="Ensembl" id="ENST00000395734.8">
    <molecule id="P27816-6"/>
    <property type="protein sequence ID" value="ENSP00000379083.3"/>
    <property type="gene ID" value="ENSG00000047849.22"/>
</dbReference>
<dbReference type="Ensembl" id="ENST00000434267.5">
    <molecule id="P27816-7"/>
    <property type="protein sequence ID" value="ENSP00000402767.1"/>
    <property type="gene ID" value="ENSG00000047849.22"/>
</dbReference>
<dbReference type="Ensembl" id="ENST00000439356.2">
    <molecule id="P27816-7"/>
    <property type="protein sequence ID" value="ENSP00000397414.1"/>
    <property type="gene ID" value="ENSG00000047849.22"/>
</dbReference>
<dbReference type="GeneID" id="4134"/>
<dbReference type="KEGG" id="hsa:4134"/>
<dbReference type="UCSC" id="uc003csb.3">
    <molecule id="P27816-1"/>
    <property type="organism name" value="human"/>
</dbReference>
<dbReference type="AGR" id="HGNC:6862"/>
<dbReference type="CTD" id="4134"/>
<dbReference type="DisGeNET" id="4134"/>
<dbReference type="GeneCards" id="MAP4"/>
<dbReference type="HGNC" id="HGNC:6862">
    <property type="gene designation" value="MAP4"/>
</dbReference>
<dbReference type="HPA" id="ENSG00000047849">
    <property type="expression patterns" value="Tissue enhanced (brain, skeletal muscle)"/>
</dbReference>
<dbReference type="MalaCards" id="MAP4"/>
<dbReference type="MIM" id="157132">
    <property type="type" value="gene"/>
</dbReference>
<dbReference type="neXtProt" id="NX_P27816"/>
<dbReference type="OpenTargets" id="ENSG00000047849"/>
<dbReference type="PharmGKB" id="PA30608"/>
<dbReference type="VEuPathDB" id="HostDB:ENSG00000047849"/>
<dbReference type="eggNOG" id="KOG2418">
    <property type="taxonomic scope" value="Eukaryota"/>
</dbReference>
<dbReference type="GeneTree" id="ENSGT00940000164123"/>
<dbReference type="HOGENOM" id="CLU_012370_0_0_1"/>
<dbReference type="InParanoid" id="P27816"/>
<dbReference type="OrthoDB" id="9378527at2759"/>
<dbReference type="PAN-GO" id="P27816">
    <property type="GO annotations" value="4 GO annotations based on evolutionary models"/>
</dbReference>
<dbReference type="PhylomeDB" id="P27816"/>
<dbReference type="TreeFam" id="TF316358"/>
<dbReference type="PathwayCommons" id="P27816"/>
<dbReference type="SignaLink" id="P27816"/>
<dbReference type="SIGNOR" id="P27816"/>
<dbReference type="BioGRID-ORCS" id="4134">
    <property type="hits" value="9 hits in 1167 CRISPR screens"/>
</dbReference>
<dbReference type="CD-CODE" id="8C2F96ED">
    <property type="entry name" value="Centrosome"/>
</dbReference>
<dbReference type="CD-CODE" id="DEE660B4">
    <property type="entry name" value="Stress granule"/>
</dbReference>
<dbReference type="CD-CODE" id="FB4E32DD">
    <property type="entry name" value="Presynaptic clusters and postsynaptic densities"/>
</dbReference>
<dbReference type="ChiTaRS" id="MAP4">
    <property type="organism name" value="human"/>
</dbReference>
<dbReference type="GeneWiki" id="MAP4"/>
<dbReference type="GenomeRNAi" id="4134"/>
<dbReference type="Pharos" id="P27816">
    <property type="development level" value="Tbio"/>
</dbReference>
<dbReference type="PRO" id="PR:P27816"/>
<dbReference type="Proteomes" id="UP000005640">
    <property type="component" value="Chromosome 3"/>
</dbReference>
<dbReference type="RNAct" id="P27816">
    <property type="molecule type" value="protein"/>
</dbReference>
<dbReference type="Bgee" id="ENSG00000047849">
    <property type="expression patterns" value="Expressed in dorsal motor nucleus of vagus nerve and 211 other cell types or tissues"/>
</dbReference>
<dbReference type="ExpressionAtlas" id="P27816">
    <property type="expression patterns" value="baseline and differential"/>
</dbReference>
<dbReference type="GO" id="GO:0030424">
    <property type="term" value="C:axon"/>
    <property type="evidence" value="ECO:0000250"/>
    <property type="project" value="ARUK-UCL"/>
</dbReference>
<dbReference type="GO" id="GO:0005930">
    <property type="term" value="C:axoneme"/>
    <property type="evidence" value="ECO:0000314"/>
    <property type="project" value="GO_Central"/>
</dbReference>
<dbReference type="GO" id="GO:0036064">
    <property type="term" value="C:ciliary basal body"/>
    <property type="evidence" value="ECO:0000314"/>
    <property type="project" value="HPA"/>
</dbReference>
<dbReference type="GO" id="GO:0005929">
    <property type="term" value="C:cilium"/>
    <property type="evidence" value="ECO:0000314"/>
    <property type="project" value="HPA"/>
</dbReference>
<dbReference type="GO" id="GO:0005829">
    <property type="term" value="C:cytosol"/>
    <property type="evidence" value="ECO:0000314"/>
    <property type="project" value="HPA"/>
</dbReference>
<dbReference type="GO" id="GO:0005874">
    <property type="term" value="C:microtubule"/>
    <property type="evidence" value="ECO:0000314"/>
    <property type="project" value="UniProt"/>
</dbReference>
<dbReference type="GO" id="GO:0005875">
    <property type="term" value="C:microtubule associated complex"/>
    <property type="evidence" value="ECO:0000304"/>
    <property type="project" value="ProtInc"/>
</dbReference>
<dbReference type="GO" id="GO:0015630">
    <property type="term" value="C:microtubule cytoskeleton"/>
    <property type="evidence" value="ECO:0000314"/>
    <property type="project" value="HPA"/>
</dbReference>
<dbReference type="GO" id="GO:0005815">
    <property type="term" value="C:microtubule organizing center"/>
    <property type="evidence" value="ECO:0000314"/>
    <property type="project" value="UniProtKB"/>
</dbReference>
<dbReference type="GO" id="GO:0072686">
    <property type="term" value="C:mitotic spindle"/>
    <property type="evidence" value="ECO:0000314"/>
    <property type="project" value="MGI"/>
</dbReference>
<dbReference type="GO" id="GO:0043005">
    <property type="term" value="C:neuron projection"/>
    <property type="evidence" value="ECO:0000318"/>
    <property type="project" value="GO_Central"/>
</dbReference>
<dbReference type="GO" id="GO:0005886">
    <property type="term" value="C:plasma membrane"/>
    <property type="evidence" value="ECO:0000314"/>
    <property type="project" value="HPA"/>
</dbReference>
<dbReference type="GO" id="GO:0008017">
    <property type="term" value="F:microtubule binding"/>
    <property type="evidence" value="ECO:0000318"/>
    <property type="project" value="GO_Central"/>
</dbReference>
<dbReference type="GO" id="GO:0140778">
    <property type="term" value="F:microtubule stabilizing activity"/>
    <property type="evidence" value="ECO:0000314"/>
    <property type="project" value="UniProt"/>
</dbReference>
<dbReference type="GO" id="GO:0003723">
    <property type="term" value="F:RNA binding"/>
    <property type="evidence" value="ECO:0007005"/>
    <property type="project" value="UniProtKB"/>
</dbReference>
<dbReference type="GO" id="GO:0005198">
    <property type="term" value="F:structural molecule activity"/>
    <property type="evidence" value="ECO:0000304"/>
    <property type="project" value="ProtInc"/>
</dbReference>
<dbReference type="GO" id="GO:0051301">
    <property type="term" value="P:cell division"/>
    <property type="evidence" value="ECO:0000315"/>
    <property type="project" value="MGI"/>
</dbReference>
<dbReference type="GO" id="GO:0061523">
    <property type="term" value="P:cilium disassembly"/>
    <property type="evidence" value="ECO:0000314"/>
    <property type="project" value="UniProt"/>
</dbReference>
<dbReference type="GO" id="GO:0051294">
    <property type="term" value="P:establishment of spindle orientation"/>
    <property type="evidence" value="ECO:0000315"/>
    <property type="project" value="MGI"/>
</dbReference>
<dbReference type="GO" id="GO:0000226">
    <property type="term" value="P:microtubule cytoskeleton organization"/>
    <property type="evidence" value="ECO:0000314"/>
    <property type="project" value="UniProt"/>
</dbReference>
<dbReference type="GO" id="GO:0046785">
    <property type="term" value="P:microtubule polymerization"/>
    <property type="evidence" value="ECO:0000314"/>
    <property type="project" value="UniProt"/>
</dbReference>
<dbReference type="GO" id="GO:0051012">
    <property type="term" value="P:microtubule sliding"/>
    <property type="evidence" value="ECO:0000315"/>
    <property type="project" value="MGI"/>
</dbReference>
<dbReference type="GO" id="GO:0007052">
    <property type="term" value="P:mitotic spindle organization"/>
    <property type="evidence" value="ECO:0000315"/>
    <property type="project" value="MGI"/>
</dbReference>
<dbReference type="GO" id="GO:1902856">
    <property type="term" value="P:negative regulation of non-motile cilium assembly"/>
    <property type="evidence" value="ECO:0000315"/>
    <property type="project" value="GO_Central"/>
</dbReference>
<dbReference type="GO" id="GO:0031175">
    <property type="term" value="P:neuron projection development"/>
    <property type="evidence" value="ECO:0000318"/>
    <property type="project" value="GO_Central"/>
</dbReference>
<dbReference type="InterPro" id="IPR027324">
    <property type="entry name" value="MAP2/MAP4/Tau"/>
</dbReference>
<dbReference type="InterPro" id="IPR001084">
    <property type="entry name" value="MAP_tubulin-bd_rpt"/>
</dbReference>
<dbReference type="PANTHER" id="PTHR11501">
    <property type="entry name" value="MICROTUBULE-ASSOCIATED PROTEIN"/>
    <property type="match status" value="1"/>
</dbReference>
<dbReference type="PANTHER" id="PTHR11501:SF16">
    <property type="entry name" value="MICROTUBULE-ASSOCIATED PROTEIN 4"/>
    <property type="match status" value="1"/>
</dbReference>
<dbReference type="Pfam" id="PF00418">
    <property type="entry name" value="Tubulin-binding"/>
    <property type="match status" value="4"/>
</dbReference>
<dbReference type="PROSITE" id="PS00229">
    <property type="entry name" value="TAU_MAP_1"/>
    <property type="match status" value="4"/>
</dbReference>
<dbReference type="PROSITE" id="PS51491">
    <property type="entry name" value="TAU_MAP_2"/>
    <property type="match status" value="4"/>
</dbReference>
<proteinExistence type="evidence at protein level"/>
<reference key="1">
    <citation type="journal article" date="1991" name="J. Biol. Chem.">
        <title>A model for microtubule-associated protein 4 structure. Domains defined by comparisons of human, mouse, and bovine sequences.</title>
        <authorList>
            <person name="West R.R."/>
            <person name="Tenbarge K.M."/>
            <person name="Olmsted J.B."/>
        </authorList>
    </citation>
    <scope>NUCLEOTIDE SEQUENCE [MRNA] (ISOFORM 1)</scope>
    <scope>VARIANTS TYR-427 AND ILE-628</scope>
</reference>
<reference key="2">
    <citation type="journal article" date="1995" name="Biochemistry">
        <title>Differential expression of alternatively spliced forms of MAP4: a repertoire of structurally different microtubule-binding domains.</title>
        <authorList>
            <person name="Chapin S.J."/>
            <person name="Lue C.M."/>
            <person name="Yu M.T."/>
            <person name="Bulinski J.C."/>
        </authorList>
    </citation>
    <scope>NUCLEOTIDE SEQUENCE [MRNA] (ISOFORM 1)</scope>
    <source>
        <tissue>Brain</tissue>
    </source>
</reference>
<reference key="3">
    <citation type="journal article" date="2004" name="Nat. Genet.">
        <title>Complete sequencing and characterization of 21,243 full-length human cDNAs.</title>
        <authorList>
            <person name="Ota T."/>
            <person name="Suzuki Y."/>
            <person name="Nishikawa T."/>
            <person name="Otsuki T."/>
            <person name="Sugiyama T."/>
            <person name="Irie R."/>
            <person name="Wakamatsu A."/>
            <person name="Hayashi K."/>
            <person name="Sato H."/>
            <person name="Nagai K."/>
            <person name="Kimura K."/>
            <person name="Makita H."/>
            <person name="Sekine M."/>
            <person name="Obayashi M."/>
            <person name="Nishi T."/>
            <person name="Shibahara T."/>
            <person name="Tanaka T."/>
            <person name="Ishii S."/>
            <person name="Yamamoto J."/>
            <person name="Saito K."/>
            <person name="Kawai Y."/>
            <person name="Isono Y."/>
            <person name="Nakamura Y."/>
            <person name="Nagahari K."/>
            <person name="Murakami K."/>
            <person name="Yasuda T."/>
            <person name="Iwayanagi T."/>
            <person name="Wagatsuma M."/>
            <person name="Shiratori A."/>
            <person name="Sudo H."/>
            <person name="Hosoiri T."/>
            <person name="Kaku Y."/>
            <person name="Kodaira H."/>
            <person name="Kondo H."/>
            <person name="Sugawara M."/>
            <person name="Takahashi M."/>
            <person name="Kanda K."/>
            <person name="Yokoi T."/>
            <person name="Furuya T."/>
            <person name="Kikkawa E."/>
            <person name="Omura Y."/>
            <person name="Abe K."/>
            <person name="Kamihara K."/>
            <person name="Katsuta N."/>
            <person name="Sato K."/>
            <person name="Tanikawa M."/>
            <person name="Yamazaki M."/>
            <person name="Ninomiya K."/>
            <person name="Ishibashi T."/>
            <person name="Yamashita H."/>
            <person name="Murakawa K."/>
            <person name="Fujimori K."/>
            <person name="Tanai H."/>
            <person name="Kimata M."/>
            <person name="Watanabe M."/>
            <person name="Hiraoka S."/>
            <person name="Chiba Y."/>
            <person name="Ishida S."/>
            <person name="Ono Y."/>
            <person name="Takiguchi S."/>
            <person name="Watanabe S."/>
            <person name="Yosida M."/>
            <person name="Hotuta T."/>
            <person name="Kusano J."/>
            <person name="Kanehori K."/>
            <person name="Takahashi-Fujii A."/>
            <person name="Hara H."/>
            <person name="Tanase T.-O."/>
            <person name="Nomura Y."/>
            <person name="Togiya S."/>
            <person name="Komai F."/>
            <person name="Hara R."/>
            <person name="Takeuchi K."/>
            <person name="Arita M."/>
            <person name="Imose N."/>
            <person name="Musashino K."/>
            <person name="Yuuki H."/>
            <person name="Oshima A."/>
            <person name="Sasaki N."/>
            <person name="Aotsuka S."/>
            <person name="Yoshikawa Y."/>
            <person name="Matsunawa H."/>
            <person name="Ichihara T."/>
            <person name="Shiohata N."/>
            <person name="Sano S."/>
            <person name="Moriya S."/>
            <person name="Momiyama H."/>
            <person name="Satoh N."/>
            <person name="Takami S."/>
            <person name="Terashima Y."/>
            <person name="Suzuki O."/>
            <person name="Nakagawa S."/>
            <person name="Senoh A."/>
            <person name="Mizoguchi H."/>
            <person name="Goto Y."/>
            <person name="Shimizu F."/>
            <person name="Wakebe H."/>
            <person name="Hishigaki H."/>
            <person name="Watanabe T."/>
            <person name="Sugiyama A."/>
            <person name="Takemoto M."/>
            <person name="Kawakami B."/>
            <person name="Yamazaki M."/>
            <person name="Watanabe K."/>
            <person name="Kumagai A."/>
            <person name="Itakura S."/>
            <person name="Fukuzumi Y."/>
            <person name="Fujimori Y."/>
            <person name="Komiyama M."/>
            <person name="Tashiro H."/>
            <person name="Tanigami A."/>
            <person name="Fujiwara T."/>
            <person name="Ono T."/>
            <person name="Yamada K."/>
            <person name="Fujii Y."/>
            <person name="Ozaki K."/>
            <person name="Hirao M."/>
            <person name="Ohmori Y."/>
            <person name="Kawabata A."/>
            <person name="Hikiji T."/>
            <person name="Kobatake N."/>
            <person name="Inagaki H."/>
            <person name="Ikema Y."/>
            <person name="Okamoto S."/>
            <person name="Okitani R."/>
            <person name="Kawakami T."/>
            <person name="Noguchi S."/>
            <person name="Itoh T."/>
            <person name="Shigeta K."/>
            <person name="Senba T."/>
            <person name="Matsumura K."/>
            <person name="Nakajima Y."/>
            <person name="Mizuno T."/>
            <person name="Morinaga M."/>
            <person name="Sasaki M."/>
            <person name="Togashi T."/>
            <person name="Oyama M."/>
            <person name="Hata H."/>
            <person name="Watanabe M."/>
            <person name="Komatsu T."/>
            <person name="Mizushima-Sugano J."/>
            <person name="Satoh T."/>
            <person name="Shirai Y."/>
            <person name="Takahashi Y."/>
            <person name="Nakagawa K."/>
            <person name="Okumura K."/>
            <person name="Nagase T."/>
            <person name="Nomura N."/>
            <person name="Kikuchi H."/>
            <person name="Masuho Y."/>
            <person name="Yamashita R."/>
            <person name="Nakai K."/>
            <person name="Yada T."/>
            <person name="Nakamura Y."/>
            <person name="Ohara O."/>
            <person name="Isogai T."/>
            <person name="Sugano S."/>
        </authorList>
    </citation>
    <scope>NUCLEOTIDE SEQUENCE [LARGE SCALE MRNA] (ISOFORM 3)</scope>
    <scope>NUCLEOTIDE SEQUENCE [LARGE SCALE MRNA] OF 1-996 (ISOFORM 4)</scope>
    <source>
        <tissue>Cerebellum</tissue>
        <tissue>Heart</tissue>
    </source>
</reference>
<reference key="4">
    <citation type="submission" date="2005-03" db="EMBL/GenBank/DDBJ databases">
        <authorList>
            <person name="Totoki Y."/>
            <person name="Toyoda A."/>
            <person name="Takeda T."/>
            <person name="Sakaki Y."/>
            <person name="Tanaka A."/>
            <person name="Yokoyama S."/>
            <person name="Ohara O."/>
            <person name="Nagase T."/>
            <person name="Kikuno R.F."/>
        </authorList>
    </citation>
    <scope>NUCLEOTIDE SEQUENCE [LARGE SCALE MRNA] (ISOFORM 6)</scope>
    <source>
        <tissue>Brain</tissue>
    </source>
</reference>
<reference key="5">
    <citation type="journal article" date="2006" name="Nature">
        <title>The DNA sequence, annotation and analysis of human chromosome 3.</title>
        <authorList>
            <person name="Muzny D.M."/>
            <person name="Scherer S.E."/>
            <person name="Kaul R."/>
            <person name="Wang J."/>
            <person name="Yu J."/>
            <person name="Sudbrak R."/>
            <person name="Buhay C.J."/>
            <person name="Chen R."/>
            <person name="Cree A."/>
            <person name="Ding Y."/>
            <person name="Dugan-Rocha S."/>
            <person name="Gill R."/>
            <person name="Gunaratne P."/>
            <person name="Harris R.A."/>
            <person name="Hawes A.C."/>
            <person name="Hernandez J."/>
            <person name="Hodgson A.V."/>
            <person name="Hume J."/>
            <person name="Jackson A."/>
            <person name="Khan Z.M."/>
            <person name="Kovar-Smith C."/>
            <person name="Lewis L.R."/>
            <person name="Lozado R.J."/>
            <person name="Metzker M.L."/>
            <person name="Milosavljevic A."/>
            <person name="Miner G.R."/>
            <person name="Morgan M.B."/>
            <person name="Nazareth L.V."/>
            <person name="Scott G."/>
            <person name="Sodergren E."/>
            <person name="Song X.-Z."/>
            <person name="Steffen D."/>
            <person name="Wei S."/>
            <person name="Wheeler D.A."/>
            <person name="Wright M.W."/>
            <person name="Worley K.C."/>
            <person name="Yuan Y."/>
            <person name="Zhang Z."/>
            <person name="Adams C.Q."/>
            <person name="Ansari-Lari M.A."/>
            <person name="Ayele M."/>
            <person name="Brown M.J."/>
            <person name="Chen G."/>
            <person name="Chen Z."/>
            <person name="Clendenning J."/>
            <person name="Clerc-Blankenburg K.P."/>
            <person name="Chen R."/>
            <person name="Chen Z."/>
            <person name="Davis C."/>
            <person name="Delgado O."/>
            <person name="Dinh H.H."/>
            <person name="Dong W."/>
            <person name="Draper H."/>
            <person name="Ernst S."/>
            <person name="Fu G."/>
            <person name="Gonzalez-Garay M.L."/>
            <person name="Garcia D.K."/>
            <person name="Gillett W."/>
            <person name="Gu J."/>
            <person name="Hao B."/>
            <person name="Haugen E."/>
            <person name="Havlak P."/>
            <person name="He X."/>
            <person name="Hennig S."/>
            <person name="Hu S."/>
            <person name="Huang W."/>
            <person name="Jackson L.R."/>
            <person name="Jacob L.S."/>
            <person name="Kelly S.H."/>
            <person name="Kube M."/>
            <person name="Levy R."/>
            <person name="Li Z."/>
            <person name="Liu B."/>
            <person name="Liu J."/>
            <person name="Liu W."/>
            <person name="Lu J."/>
            <person name="Maheshwari M."/>
            <person name="Nguyen B.-V."/>
            <person name="Okwuonu G.O."/>
            <person name="Palmeiri A."/>
            <person name="Pasternak S."/>
            <person name="Perez L.M."/>
            <person name="Phelps K.A."/>
            <person name="Plopper F.J."/>
            <person name="Qiang B."/>
            <person name="Raymond C."/>
            <person name="Rodriguez R."/>
            <person name="Saenphimmachak C."/>
            <person name="Santibanez J."/>
            <person name="Shen H."/>
            <person name="Shen Y."/>
            <person name="Subramanian S."/>
            <person name="Tabor P.E."/>
            <person name="Verduzco D."/>
            <person name="Waldron L."/>
            <person name="Wang J."/>
            <person name="Wang J."/>
            <person name="Wang Q."/>
            <person name="Williams G.A."/>
            <person name="Wong G.K.-S."/>
            <person name="Yao Z."/>
            <person name="Zhang J."/>
            <person name="Zhang X."/>
            <person name="Zhao G."/>
            <person name="Zhou J."/>
            <person name="Zhou Y."/>
            <person name="Nelson D."/>
            <person name="Lehrach H."/>
            <person name="Reinhardt R."/>
            <person name="Naylor S.L."/>
            <person name="Yang H."/>
            <person name="Olson M."/>
            <person name="Weinstock G."/>
            <person name="Gibbs R.A."/>
        </authorList>
    </citation>
    <scope>NUCLEOTIDE SEQUENCE [LARGE SCALE GENOMIC DNA]</scope>
</reference>
<reference key="6">
    <citation type="submission" date="2005-07" db="EMBL/GenBank/DDBJ databases">
        <authorList>
            <person name="Mural R.J."/>
            <person name="Istrail S."/>
            <person name="Sutton G.G."/>
            <person name="Florea L."/>
            <person name="Halpern A.L."/>
            <person name="Mobarry C.M."/>
            <person name="Lippert R."/>
            <person name="Walenz B."/>
            <person name="Shatkay H."/>
            <person name="Dew I."/>
            <person name="Miller J.R."/>
            <person name="Flanigan M.J."/>
            <person name="Edwards N.J."/>
            <person name="Bolanos R."/>
            <person name="Fasulo D."/>
            <person name="Halldorsson B.V."/>
            <person name="Hannenhalli S."/>
            <person name="Turner R."/>
            <person name="Yooseph S."/>
            <person name="Lu F."/>
            <person name="Nusskern D.R."/>
            <person name="Shue B.C."/>
            <person name="Zheng X.H."/>
            <person name="Zhong F."/>
            <person name="Delcher A.L."/>
            <person name="Huson D.H."/>
            <person name="Kravitz S.A."/>
            <person name="Mouchard L."/>
            <person name="Reinert K."/>
            <person name="Remington K.A."/>
            <person name="Clark A.G."/>
            <person name="Waterman M.S."/>
            <person name="Eichler E.E."/>
            <person name="Adams M.D."/>
            <person name="Hunkapiller M.W."/>
            <person name="Myers E.W."/>
            <person name="Venter J.C."/>
        </authorList>
    </citation>
    <scope>NUCLEOTIDE SEQUENCE [LARGE SCALE GENOMIC DNA]</scope>
</reference>
<reference key="7">
    <citation type="journal article" date="2004" name="Genome Res.">
        <title>The status, quality, and expansion of the NIH full-length cDNA project: the Mammalian Gene Collection (MGC).</title>
        <authorList>
            <consortium name="The MGC Project Team"/>
        </authorList>
    </citation>
    <scope>NUCLEOTIDE SEQUENCE [LARGE SCALE MRNA] (ISOFORMS 2 AND 7)</scope>
    <source>
        <tissue>Eye</tissue>
        <tissue>Muscle</tissue>
    </source>
</reference>
<reference key="8">
    <citation type="submission" date="2008-10" db="UniProtKB">
        <authorList>
            <person name="Bienvenut W.V."/>
            <person name="Ramsay A."/>
            <person name="Leung H.Y."/>
            <person name="Zebisch A."/>
            <person name="Kolch W."/>
        </authorList>
    </citation>
    <scope>PROTEIN SEQUENCE OF 2-23; 322-356; 436-448; 561-574; 727-738; 810-832; 853-862; 872-888 AND 923-933</scope>
    <scope>CLEAVAGE OF INITIATOR METHIONINE</scope>
    <scope>ACETYLATION AT ALA-2</scope>
    <scope>IDENTIFICATION BY MASS SPECTROMETRY</scope>
    <source>
        <tissue>Colon carcinoma</tissue>
        <tissue>Prostatic adenocarcinoma</tissue>
    </source>
</reference>
<reference key="9">
    <citation type="journal article" date="1991" name="J. Cell Sci.">
        <title>Non-neuronal 210 x 10(3) Mr microtubule-associated protein (MAP4) contains a domain homologous to the microtubule-binding domains of neuronal MAP2 and tau.</title>
        <authorList>
            <person name="Chapin S.J."/>
            <person name="Bulinski J.C."/>
        </authorList>
    </citation>
    <scope>NUCLEOTIDE SEQUENCE [MRNA] OF 102-1152 (ISOFORM 1)</scope>
    <source>
        <tissue>Brain</tissue>
    </source>
</reference>
<reference key="10">
    <citation type="journal article" date="2007" name="BMC Genomics">
        <title>The full-ORF clone resource of the German cDNA consortium.</title>
        <authorList>
            <person name="Bechtel S."/>
            <person name="Rosenfelder H."/>
            <person name="Duda A."/>
            <person name="Schmidt C.P."/>
            <person name="Ernst U."/>
            <person name="Wellenreuther R."/>
            <person name="Mehrle A."/>
            <person name="Schuster C."/>
            <person name="Bahr A."/>
            <person name="Bloecker H."/>
            <person name="Heubner D."/>
            <person name="Hoerlein A."/>
            <person name="Michel G."/>
            <person name="Wedler H."/>
            <person name="Koehrer K."/>
            <person name="Ottenwaelder B."/>
            <person name="Poustka A."/>
            <person name="Wiemann S."/>
            <person name="Schupp I."/>
        </authorList>
    </citation>
    <scope>NUCLEOTIDE SEQUENCE [LARGE SCALE MRNA] OF 318-1151 (ISOFORM 5)</scope>
    <source>
        <tissue>Liver</tissue>
    </source>
</reference>
<reference key="11">
    <citation type="journal article" date="2000" name="Cell Struct. Funct.">
        <title>Ser787 in the proline-rich region of human MAP4 is a critical phosphorylation site that reduces its activity to promote tubulin polymerization.</title>
        <authorList>
            <person name="Kitazawa H."/>
            <person name="Iida J."/>
            <person name="Uchida A."/>
            <person name="Haino-Fukushima K."/>
            <person name="Itoh T.J."/>
            <person name="Hotani H."/>
            <person name="Ookata K."/>
            <person name="Murofushi H."/>
            <person name="Bulinski J.C."/>
            <person name="Kishimoto T."/>
            <person name="Hisanaga S."/>
        </authorList>
    </citation>
    <scope>PHOSPHORYLATION AT SER-696 AND SER-787</scope>
    <scope>FUNCTION</scope>
    <scope>MUTAGENESIS OF SER-696 AND SER-787</scope>
</reference>
<reference key="12">
    <citation type="journal article" date="2004" name="Anal. Chem.">
        <title>Robust phosphoproteomic profiling of tyrosine phosphorylation sites from human T cells using immobilized metal affinity chromatography and tandem mass spectrometry.</title>
        <authorList>
            <person name="Brill L.M."/>
            <person name="Salomon A.R."/>
            <person name="Ficarro S.B."/>
            <person name="Mukherji M."/>
            <person name="Stettler-Gill M."/>
            <person name="Peters E.C."/>
        </authorList>
    </citation>
    <scope>IDENTIFICATION BY MASS SPECTROMETRY [LARGE SCALE ANALYSIS]</scope>
    <source>
        <tissue>Leukemic T-cell</tissue>
    </source>
</reference>
<reference key="13">
    <citation type="journal article" date="2004" name="Genome Biol.">
        <title>An unappreciated role for RNA surveillance.</title>
        <authorList>
            <person name="Hillman R.T."/>
            <person name="Green R.E."/>
            <person name="Brenner S.E."/>
        </authorList>
    </citation>
    <scope>SPLICE ISOFORM(S) THAT ARE POTENTIAL NMD TARGET(S)</scope>
</reference>
<reference key="14">
    <citation type="journal article" date="2005" name="Mol. Biol. Cell">
        <title>Mammalian septins regulate microtubule stability through interaction with the microtubule-binding protein MAP4.</title>
        <authorList>
            <person name="Kremer B.E."/>
            <person name="Haystead T."/>
            <person name="Macara I.G."/>
        </authorList>
    </citation>
    <scope>INTERACTION WITH SEPTIN2</scope>
</reference>
<reference key="15">
    <citation type="journal article" date="2006" name="Cell">
        <title>Global, in vivo, and site-specific phosphorylation dynamics in signaling networks.</title>
        <authorList>
            <person name="Olsen J.V."/>
            <person name="Blagoev B."/>
            <person name="Gnad F."/>
            <person name="Macek B."/>
            <person name="Kumar C."/>
            <person name="Mortensen P."/>
            <person name="Mann M."/>
        </authorList>
    </citation>
    <scope>PHOSPHORYLATION [LARGE SCALE ANALYSIS] AT SER-507; THR-521; THR-571 AND SER-1073</scope>
    <scope>PHOSPHORYLATION [LARGE SCALE ANALYSIS] AT SER-269 (ISOFORM 4)</scope>
    <scope>IDENTIFICATION BY MASS SPECTROMETRY [LARGE SCALE ANALYSIS]</scope>
    <source>
        <tissue>Cervix carcinoma</tissue>
    </source>
</reference>
<reference key="16">
    <citation type="journal article" date="2006" name="Nat. Biotechnol.">
        <title>A probability-based approach for high-throughput protein phosphorylation analysis and site localization.</title>
        <authorList>
            <person name="Beausoleil S.A."/>
            <person name="Villen J."/>
            <person name="Gerber S.A."/>
            <person name="Rush J."/>
            <person name="Gygi S.P."/>
        </authorList>
    </citation>
    <scope>PHOSPHORYLATION [LARGE SCALE ANALYSIS] AT THR-571 AND SER-827</scope>
    <scope>IDENTIFICATION BY MASS SPECTROMETRY [LARGE SCALE ANALYSIS]</scope>
    <source>
        <tissue>Cervix carcinoma</tissue>
    </source>
</reference>
<reference key="17">
    <citation type="journal article" date="2007" name="Electrophoresis">
        <title>Toward a global characterization of the phosphoproteome in prostate cancer cells: identification of phosphoproteins in the LNCaP cell line.</title>
        <authorList>
            <person name="Giorgianni F."/>
            <person name="Zhao Y."/>
            <person name="Desiderio D.M."/>
            <person name="Beranova-Giorgianni S."/>
        </authorList>
    </citation>
    <scope>IDENTIFICATION BY MASS SPECTROMETRY [LARGE SCALE ANALYSIS]</scope>
    <source>
        <tissue>Prostate cancer</tissue>
    </source>
</reference>
<reference key="18">
    <citation type="journal article" date="2007" name="J. Proteome Res.">
        <title>Improved titanium dioxide enrichment of phosphopeptides from HeLa cells and high confident phosphopeptide identification by cross-validation of MS/MS and MS/MS/MS spectra.</title>
        <authorList>
            <person name="Yu L.R."/>
            <person name="Zhu Z."/>
            <person name="Chan K.C."/>
            <person name="Issaq H.J."/>
            <person name="Dimitrov D.S."/>
            <person name="Veenstra T.D."/>
        </authorList>
    </citation>
    <scope>PHOSPHORYLATION [LARGE SCALE ANALYSIS] AT SER-358 AND SER-384</scope>
    <scope>IDENTIFICATION BY MASS SPECTROMETRY [LARGE SCALE ANALYSIS]</scope>
    <source>
        <tissue>Cervix carcinoma</tissue>
    </source>
</reference>
<reference key="19">
    <citation type="journal article" date="2007" name="Mol. Cell. Proteomics">
        <title>Quantitative phosphoproteome profiling of Wnt3a-mediated signaling network: indicating the involvement of ribonucleoside-diphosphate reductase M2 subunit phosphorylation at residue serine 20 in canonical Wnt signal transduction.</title>
        <authorList>
            <person name="Tang L.-Y."/>
            <person name="Deng N."/>
            <person name="Wang L.-S."/>
            <person name="Dai J."/>
            <person name="Wang Z.-L."/>
            <person name="Jiang X.-S."/>
            <person name="Li S.-J."/>
            <person name="Li L."/>
            <person name="Sheng Q.-H."/>
            <person name="Wu D.-Q."/>
            <person name="Li L."/>
            <person name="Zeng R."/>
        </authorList>
    </citation>
    <scope>PHOSPHORYLATION [LARGE SCALE ANALYSIS] AT SER-280</scope>
    <scope>PHOSPHORYLATION [LARGE SCALE ANALYSIS] AT SER-337 AND SER-338 (ISOFORM 3)</scope>
    <scope>IDENTIFICATION BY MASS SPECTROMETRY [LARGE SCALE ANALYSIS]</scope>
    <source>
        <tissue>Embryonic kidney</tissue>
    </source>
</reference>
<reference key="20">
    <citation type="journal article" date="2008" name="J. Proteome Res.">
        <title>Phosphoproteome of resting human platelets.</title>
        <authorList>
            <person name="Zahedi R.P."/>
            <person name="Lewandrowski U."/>
            <person name="Wiesner J."/>
            <person name="Wortelkamp S."/>
            <person name="Moebius J."/>
            <person name="Schuetz C."/>
            <person name="Walter U."/>
            <person name="Gambaryan S."/>
            <person name="Sickmann A."/>
        </authorList>
    </citation>
    <scope>PHOSPHORYLATION [LARGE SCALE ANALYSIS] AT THR-521</scope>
    <scope>IDENTIFICATION BY MASS SPECTROMETRY [LARGE SCALE ANALYSIS]</scope>
    <source>
        <tissue>Platelet</tissue>
    </source>
</reference>
<reference key="21">
    <citation type="journal article" date="2008" name="Proc. Natl. Acad. Sci. U.S.A.">
        <title>A quantitative atlas of mitotic phosphorylation.</title>
        <authorList>
            <person name="Dephoure N."/>
            <person name="Zhou C."/>
            <person name="Villen J."/>
            <person name="Beausoleil S.A."/>
            <person name="Bakalarski C.E."/>
            <person name="Elledge S.J."/>
            <person name="Gygi S.P."/>
        </authorList>
    </citation>
    <scope>PHOSPHORYLATION [LARGE SCALE ANALYSIS] AT SER-60; SER-99; SER-280; SER-358; SER-384; SER-507; THR-521; THR-571; SER-580; THR-585; SER-636; SER-825; SER-941 AND SER-1151</scope>
    <scope>PHOSPHORYLATION [LARGE SCALE ANALYSIS] AT THR-28 AND SER-269 (ISOFORM 4)</scope>
    <scope>VARIANT [LARGE SCALE ANALYSIS] ILE-628</scope>
    <scope>IDENTIFICATION BY MASS SPECTROMETRY [LARGE SCALE ANALYSIS]</scope>
    <source>
        <tissue>Cervix carcinoma</tissue>
    </source>
</reference>
<reference key="22">
    <citation type="journal article" date="2009" name="Anal. Chem.">
        <title>Lys-N and trypsin cover complementary parts of the phosphoproteome in a refined SCX-based approach.</title>
        <authorList>
            <person name="Gauci S."/>
            <person name="Helbig A.O."/>
            <person name="Slijper M."/>
            <person name="Krijgsveld J."/>
            <person name="Heck A.J."/>
            <person name="Mohammed S."/>
        </authorList>
    </citation>
    <scope>IDENTIFICATION BY MASS SPECTROMETRY [LARGE SCALE ANALYSIS]</scope>
</reference>
<reference key="23">
    <citation type="journal article" date="2009" name="Mol. Cell. Proteomics">
        <title>Large-scale proteomics analysis of the human kinome.</title>
        <authorList>
            <person name="Oppermann F.S."/>
            <person name="Gnad F."/>
            <person name="Olsen J.V."/>
            <person name="Hornberger R."/>
            <person name="Greff Z."/>
            <person name="Keri G."/>
            <person name="Mann M."/>
            <person name="Daub H."/>
        </authorList>
    </citation>
    <scope>PHOSPHORYLATION [LARGE SCALE ANALYSIS] AT SER-1073</scope>
    <scope>IDENTIFICATION BY MASS SPECTROMETRY [LARGE SCALE ANALYSIS]</scope>
</reference>
<reference key="24">
    <citation type="journal article" date="2009" name="Sci. Signal.">
        <title>Quantitative phosphoproteomic analysis of T cell receptor signaling reveals system-wide modulation of protein-protein interactions.</title>
        <authorList>
            <person name="Mayya V."/>
            <person name="Lundgren D.H."/>
            <person name="Hwang S.-I."/>
            <person name="Rezaul K."/>
            <person name="Wu L."/>
            <person name="Eng J.K."/>
            <person name="Rodionov V."/>
            <person name="Han D.K."/>
        </authorList>
    </citation>
    <scope>PHOSPHORYLATION [LARGE SCALE ANALYSIS] AT SER-507; THR-521; THR-571; THR-585 AND SER-1151</scope>
    <scope>IDENTIFICATION BY MASS SPECTROMETRY [LARGE SCALE ANALYSIS]</scope>
    <source>
        <tissue>Leukemic T-cell</tissue>
    </source>
</reference>
<reference key="25">
    <citation type="journal article" date="2010" name="Sci. Signal.">
        <title>Quantitative phosphoproteomics reveals widespread full phosphorylation site occupancy during mitosis.</title>
        <authorList>
            <person name="Olsen J.V."/>
            <person name="Vermeulen M."/>
            <person name="Santamaria A."/>
            <person name="Kumar C."/>
            <person name="Miller M.L."/>
            <person name="Jensen L.J."/>
            <person name="Gnad F."/>
            <person name="Cox J."/>
            <person name="Jensen T.S."/>
            <person name="Nigg E.A."/>
            <person name="Brunak S."/>
            <person name="Mann M."/>
        </authorList>
    </citation>
    <scope>ACETYLATION [LARGE SCALE ANALYSIS] AT ALA-2</scope>
    <scope>PHOSPHORYLATION [LARGE SCALE ANALYSIS] AT SER-14; SER-280; THR-282; THR-354; SER-358; THR-380; SER-384; SER-507; SER-510; THR-521; THR-526; THR-571; THR-585; SER-624; SER-636; SER-787; SER-797; SER-825; SER-928; SER-941; SER-1073 AND SER-1151</scope>
    <scope>PHOSPHORYLATION [LARGE SCALE ANALYSIS] AT SER-269 (ISOFORM 4)</scope>
    <scope>VARIANT [LARGE SCALE ANALYSIS] ILE-628</scope>
    <scope>CLEAVAGE OF INITIATOR METHIONINE [LARGE SCALE ANALYSIS]</scope>
    <scope>IDENTIFICATION BY MASS SPECTROMETRY [LARGE SCALE ANALYSIS]</scope>
    <source>
        <tissue>Cervix carcinoma</tissue>
    </source>
</reference>
<reference key="26">
    <citation type="journal article" date="2011" name="BMC Syst. Biol.">
        <title>Initial characterization of the human central proteome.</title>
        <authorList>
            <person name="Burkard T.R."/>
            <person name="Planyavsky M."/>
            <person name="Kaupe I."/>
            <person name="Breitwieser F.P."/>
            <person name="Buerckstuemmer T."/>
            <person name="Bennett K.L."/>
            <person name="Superti-Furga G."/>
            <person name="Colinge J."/>
        </authorList>
    </citation>
    <scope>IDENTIFICATION BY MASS SPECTROMETRY [LARGE SCALE ANALYSIS]</scope>
</reference>
<reference key="27">
    <citation type="journal article" date="2011" name="Sci. Signal.">
        <title>System-wide temporal characterization of the proteome and phosphoproteome of human embryonic stem cell differentiation.</title>
        <authorList>
            <person name="Rigbolt K.T."/>
            <person name="Prokhorova T.A."/>
            <person name="Akimov V."/>
            <person name="Henningsen J."/>
            <person name="Johansen P.T."/>
            <person name="Kratchmarova I."/>
            <person name="Kassem M."/>
            <person name="Mann M."/>
            <person name="Olsen J.V."/>
            <person name="Blagoev B."/>
        </authorList>
    </citation>
    <scope>PHOSPHORYLATION [LARGE SCALE ANALYSIS] AT SER-280; THR-282; SER-358; SER-384; SER-507; THR-521; THR-526; THR-571; SER-636; SER-787; SER-941; THR-942; SER-1000; SER-1073; SER-1145 AND SER-1151</scope>
    <scope>PHOSPHORYLATION [LARGE SCALE ANALYSIS] AT SER-803 (ISOFORM 5)</scope>
    <scope>IDENTIFICATION BY MASS SPECTROMETRY [LARGE SCALE ANALYSIS]</scope>
</reference>
<reference key="28">
    <citation type="journal article" date="2012" name="Proc. Natl. Acad. Sci. U.S.A.">
        <title>N-terminal acetylome analyses and functional insights of the N-terminal acetyltransferase NatB.</title>
        <authorList>
            <person name="Van Damme P."/>
            <person name="Lasa M."/>
            <person name="Polevoda B."/>
            <person name="Gazquez C."/>
            <person name="Elosegui-Artola A."/>
            <person name="Kim D.S."/>
            <person name="De Juan-Pardo E."/>
            <person name="Demeyer K."/>
            <person name="Hole K."/>
            <person name="Larrea E."/>
            <person name="Timmerman E."/>
            <person name="Prieto J."/>
            <person name="Arnesen T."/>
            <person name="Sherman F."/>
            <person name="Gevaert K."/>
            <person name="Aldabe R."/>
        </authorList>
    </citation>
    <scope>ACETYLATION [LARGE SCALE ANALYSIS] AT ALA-2</scope>
    <scope>CLEAVAGE OF INITIATOR METHIONINE [LARGE SCALE ANALYSIS]</scope>
    <scope>IDENTIFICATION BY MASS SPECTROMETRY [LARGE SCALE ANALYSIS]</scope>
</reference>
<reference key="29">
    <citation type="journal article" date="2013" name="J. Proteome Res.">
        <title>Toward a comprehensive characterization of a human cancer cell phosphoproteome.</title>
        <authorList>
            <person name="Zhou H."/>
            <person name="Di Palma S."/>
            <person name="Preisinger C."/>
            <person name="Peng M."/>
            <person name="Polat A.N."/>
            <person name="Heck A.J."/>
            <person name="Mohammed S."/>
        </authorList>
    </citation>
    <scope>PHOSPHORYLATION [LARGE SCALE ANALYSIS] AT SER-5; SER-60; SER-280; SER-358; SER-384; SER-440; THR-442; SER-507; SER-510; THR-521; THR-571; SER-580; THR-585; SER-636; SER-696; SER-713; SER-723; SER-787; SER-825; SER-853; SER-928 AND SER-1073</scope>
    <scope>IDENTIFICATION BY MASS SPECTROMETRY [LARGE SCALE ANALYSIS]</scope>
    <source>
        <tissue>Cervix carcinoma</tissue>
        <tissue>Erythroleukemia</tissue>
    </source>
</reference>
<reference key="30">
    <citation type="journal article" date="2014" name="J. Proteomics">
        <title>An enzyme assisted RP-RPLC approach for in-depth analysis of human liver phosphoproteome.</title>
        <authorList>
            <person name="Bian Y."/>
            <person name="Song C."/>
            <person name="Cheng K."/>
            <person name="Dong M."/>
            <person name="Wang F."/>
            <person name="Huang J."/>
            <person name="Sun D."/>
            <person name="Wang L."/>
            <person name="Ye M."/>
            <person name="Zou H."/>
        </authorList>
    </citation>
    <scope>PHOSPHORYLATION [LARGE SCALE ANALYSIS] AT SER-280; SER-358; SER-384; SER-636 AND SER-1000</scope>
    <scope>IDENTIFICATION BY MASS SPECTROMETRY [LARGE SCALE ANALYSIS]</scope>
    <source>
        <tissue>Liver</tissue>
    </source>
</reference>
<reference key="31">
    <citation type="journal article" date="2014" name="Proc. Natl. Acad. Sci. U.S.A.">
        <title>Mapping of SUMO sites and analysis of SUMOylation changes induced by external stimuli.</title>
        <authorList>
            <person name="Impens F."/>
            <person name="Radoshevich L."/>
            <person name="Cossart P."/>
            <person name="Ribet D."/>
        </authorList>
    </citation>
    <scope>SUMOYLATION [LARGE SCALE ANALYSIS] AT LYS-269</scope>
    <scope>IDENTIFICATION BY MASS SPECTROMETRY [LARGE SCALE ANALYSIS]</scope>
</reference>
<reference key="32">
    <citation type="journal article" date="2015" name="Proteomics">
        <title>N-terminome analysis of the human mitochondrial proteome.</title>
        <authorList>
            <person name="Vaca Jacome A.S."/>
            <person name="Rabilloud T."/>
            <person name="Schaeffer-Reiss C."/>
            <person name="Rompais M."/>
            <person name="Ayoub D."/>
            <person name="Lane L."/>
            <person name="Bairoch A."/>
            <person name="Van Dorsselaer A."/>
            <person name="Carapito C."/>
        </authorList>
    </citation>
    <scope>IDENTIFICATION BY MASS SPECTROMETRY [LARGE SCALE ANALYSIS]</scope>
</reference>
<reference key="33">
    <citation type="journal article" date="2017" name="Nat. Struct. Mol. Biol.">
        <title>Site-specific mapping of the human SUMO proteome reveals co-modification with phosphorylation.</title>
        <authorList>
            <person name="Hendriks I.A."/>
            <person name="Lyon D."/>
            <person name="Young C."/>
            <person name="Jensen L.J."/>
            <person name="Vertegaal A.C."/>
            <person name="Nielsen M.L."/>
        </authorList>
    </citation>
    <scope>SUMOYLATION [LARGE SCALE ANALYSIS] AT LYS-838</scope>
    <scope>IDENTIFICATION BY MASS SPECTROMETRY [LARGE SCALE ANALYSIS]</scope>
</reference>
<reference key="34">
    <citation type="journal article" date="2018" name="J. Allergy Clin. Immunol.">
        <title>Dual loss of p110delta PI3-kinase and SKAP (KNSTRN) expression leads to combined immunodeficiency and multisystem syndromic features.</title>
        <authorList>
            <person name="Sharfe N."/>
            <person name="Karanxha A."/>
            <person name="Dadi H."/>
            <person name="Merico D."/>
            <person name="Chitayat D."/>
            <person name="Herbrick J.A."/>
            <person name="Freeman S."/>
            <person name="Grinstein S."/>
            <person name="Roifman C.M."/>
        </authorList>
    </citation>
    <scope>SUBCELLULAR LOCATION</scope>
    <scope>INTERACTION WITH KNSTRN</scope>
</reference>
<reference key="35">
    <citation type="journal article" date="2022" name="Cell Res.">
        <title>Regulators of tubulin polyglutamylation control nuclear shape and cilium disassembly by balancing microtubule and actin assembly.</title>
        <authorList>
            <person name="Wang L."/>
            <person name="Paudyal S.C."/>
            <person name="Kang Y."/>
            <person name="Owa M."/>
            <person name="Liang F.X."/>
            <person name="Spektor A."/>
            <person name="Knaut H."/>
            <person name="Sanchez I."/>
            <person name="Dynlacht B.D."/>
        </authorList>
    </citation>
    <scope>MICROTUBULE-BINDING</scope>
    <scope>SUBCELLULAR LOCATION</scope>
    <scope>FUNCTION</scope>
</reference>
<feature type="initiator methionine" description="Removed" evidence="9 23 25">
    <location>
        <position position="1"/>
    </location>
</feature>
<feature type="chain" id="PRO_0000072751" description="Microtubule-associated protein 4">
    <location>
        <begin position="2"/>
        <end position="1152"/>
    </location>
</feature>
<feature type="repeat" description="1">
    <location>
        <begin position="248"/>
        <end position="261"/>
    </location>
</feature>
<feature type="repeat" description="2">
    <location>
        <begin position="262"/>
        <end position="275"/>
    </location>
</feature>
<feature type="repeat" description="3">
    <location>
        <begin position="276"/>
        <end position="289"/>
    </location>
</feature>
<feature type="repeat" description="4">
    <location>
        <begin position="290"/>
        <end position="303"/>
    </location>
</feature>
<feature type="repeat" description="5">
    <location>
        <begin position="304"/>
        <end position="317"/>
    </location>
</feature>
<feature type="repeat" description="6">
    <location>
        <begin position="318"/>
        <end position="331"/>
    </location>
</feature>
<feature type="repeat" description="7">
    <location>
        <begin position="332"/>
        <end position="345"/>
    </location>
</feature>
<feature type="repeat" description="8; truncated">
    <location>
        <begin position="346"/>
        <end position="351"/>
    </location>
</feature>
<feature type="repeat" description="26 residues 1">
    <location>
        <begin position="352"/>
        <end position="377"/>
    </location>
</feature>
<feature type="repeat" description="26 residues 2">
    <location>
        <begin position="378"/>
        <end position="403"/>
    </location>
</feature>
<feature type="repeat" description="9">
    <location>
        <begin position="408"/>
        <end position="421"/>
    </location>
</feature>
<feature type="repeat" description="10">
    <location>
        <begin position="422"/>
        <end position="433"/>
    </location>
</feature>
<feature type="repeat" description="11">
    <location>
        <begin position="434"/>
        <end position="447"/>
    </location>
</feature>
<feature type="repeat" description="12">
    <location>
        <begin position="448"/>
        <end position="461"/>
    </location>
</feature>
<feature type="repeat" description="13">
    <location>
        <begin position="462"/>
        <end position="475"/>
    </location>
</feature>
<feature type="repeat" description="14">
    <location>
        <begin position="476"/>
        <end position="489"/>
    </location>
</feature>
<feature type="repeat" description="15">
    <location>
        <begin position="490"/>
        <end position="503"/>
    </location>
</feature>
<feature type="repeat" description="16">
    <location>
        <begin position="504"/>
        <end position="517"/>
    </location>
</feature>
<feature type="repeat" description="17">
    <location>
        <begin position="532"/>
        <end position="545"/>
    </location>
</feature>
<feature type="repeat" description="Tau/MAP 1">
    <location>
        <begin position="923"/>
        <end position="953"/>
    </location>
</feature>
<feature type="repeat" description="Tau/MAP 2">
    <location>
        <begin position="992"/>
        <end position="1022"/>
    </location>
</feature>
<feature type="repeat" description="Tau/MAP 3">
    <location>
        <begin position="1023"/>
        <end position="1053"/>
    </location>
</feature>
<feature type="repeat" description="Tau/MAP 4">
    <location>
        <begin position="1054"/>
        <end position="1085"/>
    </location>
</feature>
<feature type="region of interest" description="Disordered" evidence="3">
    <location>
        <begin position="50"/>
        <end position="100"/>
    </location>
</feature>
<feature type="region of interest" description="17 X 14 AA tandem repeats">
    <location>
        <begin position="248"/>
        <end position="545"/>
    </location>
</feature>
<feature type="region of interest" description="Disordered" evidence="3">
    <location>
        <begin position="362"/>
        <end position="401"/>
    </location>
</feature>
<feature type="region of interest" description="Disordered" evidence="3">
    <location>
        <begin position="641"/>
        <end position="991"/>
    </location>
</feature>
<feature type="region of interest" description="Disordered" evidence="3">
    <location>
        <begin position="1074"/>
        <end position="1152"/>
    </location>
</feature>
<feature type="compositionally biased region" description="Basic and acidic residues" evidence="3">
    <location>
        <begin position="53"/>
        <end position="67"/>
    </location>
</feature>
<feature type="compositionally biased region" description="Polar residues" evidence="3">
    <location>
        <begin position="68"/>
        <end position="81"/>
    </location>
</feature>
<feature type="compositionally biased region" description="Basic and acidic residues" evidence="3">
    <location>
        <begin position="371"/>
        <end position="384"/>
    </location>
</feature>
<feature type="compositionally biased region" description="Basic and acidic residues" evidence="3">
    <location>
        <begin position="644"/>
        <end position="653"/>
    </location>
</feature>
<feature type="compositionally biased region" description="Polar residues" evidence="3">
    <location>
        <begin position="654"/>
        <end position="666"/>
    </location>
</feature>
<feature type="compositionally biased region" description="Polar residues" evidence="3">
    <location>
        <begin position="680"/>
        <end position="689"/>
    </location>
</feature>
<feature type="compositionally biased region" description="Polar residues" evidence="3">
    <location>
        <begin position="704"/>
        <end position="725"/>
    </location>
</feature>
<feature type="compositionally biased region" description="Basic and acidic residues" evidence="3">
    <location>
        <begin position="769"/>
        <end position="786"/>
    </location>
</feature>
<feature type="compositionally biased region" description="Low complexity" evidence="3">
    <location>
        <begin position="788"/>
        <end position="819"/>
    </location>
</feature>
<feature type="compositionally biased region" description="Basic and acidic residues" evidence="3">
    <location>
        <begin position="839"/>
        <end position="848"/>
    </location>
</feature>
<feature type="compositionally biased region" description="Low complexity" evidence="3">
    <location>
        <begin position="861"/>
        <end position="878"/>
    </location>
</feature>
<feature type="compositionally biased region" description="Polar residues" evidence="3">
    <location>
        <begin position="911"/>
        <end position="929"/>
    </location>
</feature>
<feature type="compositionally biased region" description="Low complexity" evidence="3">
    <location>
        <begin position="1105"/>
        <end position="1119"/>
    </location>
</feature>
<feature type="compositionally biased region" description="Polar residues" evidence="3">
    <location>
        <begin position="1142"/>
        <end position="1152"/>
    </location>
</feature>
<feature type="modified residue" description="N-acetylalanine" evidence="9 23 25">
    <location>
        <position position="2"/>
    </location>
</feature>
<feature type="modified residue" description="Phosphoserine" evidence="26">
    <location>
        <position position="5"/>
    </location>
</feature>
<feature type="modified residue" description="Phosphoserine" evidence="23">
    <location>
        <position position="14"/>
    </location>
</feature>
<feature type="modified residue" description="Phosphoserine" evidence="20 26">
    <location>
        <position position="60"/>
    </location>
</feature>
<feature type="modified residue" description="Phosphoserine" evidence="20">
    <location>
        <position position="99"/>
    </location>
</feature>
<feature type="modified residue" description="Phosphoserine" evidence="2">
    <location>
        <position position="253"/>
    </location>
</feature>
<feature type="modified residue" description="Phosphoserine" evidence="17 20 23 24 26 27">
    <location>
        <position position="280"/>
    </location>
</feature>
<feature type="modified residue" description="Phosphothreonine" evidence="23 24">
    <location>
        <position position="282"/>
    </location>
</feature>
<feature type="modified residue" description="Phosphothreonine" evidence="23">
    <location>
        <position position="354"/>
    </location>
</feature>
<feature type="modified residue" description="Phosphoserine" evidence="18 20 23 24 26 27">
    <location>
        <position position="358"/>
    </location>
</feature>
<feature type="modified residue" description="Phosphothreonine" evidence="23">
    <location>
        <position position="380"/>
    </location>
</feature>
<feature type="modified residue" description="Phosphoserine" evidence="18 20 23 24 26 27">
    <location>
        <position position="384"/>
    </location>
</feature>
<feature type="modified residue" description="Phosphoserine" evidence="26">
    <location>
        <position position="440"/>
    </location>
</feature>
<feature type="modified residue" description="Phosphothreonine" evidence="26">
    <location>
        <position position="442"/>
    </location>
</feature>
<feature type="modified residue" description="Phosphoserine" evidence="16 20 22 23 24 26">
    <location>
        <position position="507"/>
    </location>
</feature>
<feature type="modified residue" description="Phosphoserine" evidence="23 26">
    <location>
        <position position="510"/>
    </location>
</feature>
<feature type="modified residue" description="Phosphothreonine" evidence="16 19 20 22 23 24 26">
    <location>
        <position position="521"/>
    </location>
</feature>
<feature type="modified residue" description="Phosphothreonine" evidence="23 24">
    <location>
        <position position="526"/>
    </location>
</feature>
<feature type="modified residue" description="Phosphothreonine" evidence="15 16 20 22 23 24 26">
    <location>
        <position position="571"/>
    </location>
</feature>
<feature type="modified residue" description="Phosphoserine" evidence="20 26">
    <location>
        <position position="580"/>
    </location>
</feature>
<feature type="modified residue" description="Phosphothreonine" evidence="20 22 23 26">
    <location>
        <position position="585"/>
    </location>
</feature>
<feature type="modified residue" description="Phosphoserine" evidence="23">
    <location>
        <position position="624"/>
    </location>
</feature>
<feature type="modified residue" description="Phosphoserine" evidence="20 23 24 26 27">
    <location>
        <position position="636"/>
    </location>
</feature>
<feature type="modified residue" description="Phosphoserine" evidence="2">
    <location>
        <position position="643"/>
    </location>
</feature>
<feature type="modified residue" description="Phosphothreonine" evidence="2">
    <location>
        <position position="687"/>
    </location>
</feature>
<feature type="modified residue" description="Phosphoserine" evidence="4 26">
    <location>
        <position position="696"/>
    </location>
</feature>
<feature type="modified residue" description="Phosphoserine" evidence="26">
    <location>
        <position position="713"/>
    </location>
</feature>
<feature type="modified residue" description="Phosphoserine" evidence="26">
    <location>
        <position position="723"/>
    </location>
</feature>
<feature type="modified residue" description="Phosphoserine" evidence="4 23 24 26">
    <location>
        <position position="787"/>
    </location>
</feature>
<feature type="modified residue" description="Phosphoserine" evidence="23">
    <location>
        <position position="797"/>
    </location>
</feature>
<feature type="modified residue" description="Phosphoserine" evidence="20 23 26">
    <location>
        <position position="825"/>
    </location>
</feature>
<feature type="modified residue" description="Phosphoserine" evidence="15">
    <location>
        <position position="827"/>
    </location>
</feature>
<feature type="modified residue" description="Phosphoserine" evidence="26">
    <location>
        <position position="853"/>
    </location>
</feature>
<feature type="modified residue" description="Phosphoserine" evidence="23 26">
    <location>
        <position position="928"/>
    </location>
</feature>
<feature type="modified residue" description="Phosphoserine" evidence="20 23 24">
    <location>
        <position position="941"/>
    </location>
</feature>
<feature type="modified residue" description="Phosphothreonine" evidence="24">
    <location>
        <position position="942"/>
    </location>
</feature>
<feature type="modified residue" description="Phosphoserine" evidence="24 27">
    <location>
        <position position="1000"/>
    </location>
</feature>
<feature type="modified residue" description="Phosphoserine" evidence="16 21 23 24 26">
    <location>
        <position position="1073"/>
    </location>
</feature>
<feature type="modified residue" description="Phosphoserine" evidence="24">
    <location>
        <position position="1145"/>
    </location>
</feature>
<feature type="modified residue" description="Phosphoserine" evidence="20 22 23 24">
    <location>
        <position position="1151"/>
    </location>
</feature>
<feature type="cross-link" description="Glycyl lysine isopeptide (Lys-Gly) (interchain with G-Cter in SUMO1)" evidence="28">
    <location>
        <position position="269"/>
    </location>
</feature>
<feature type="cross-link" description="Glycyl lysine isopeptide (Lys-Gly) (interchain with G-Cter in SUMO2)" evidence="29">
    <location>
        <position position="838"/>
    </location>
</feature>
<feature type="splice variant" id="VSP_032065" description="In isoform 3." evidence="10">
    <location>
        <begin position="1"/>
        <end position="151"/>
    </location>
</feature>
<feature type="splice variant" id="VSP_032066" description="In isoform 4." evidence="10">
    <location>
        <begin position="1"/>
        <end position="82"/>
    </location>
</feature>
<feature type="splice variant" id="VSP_032067" description="In isoform 4." evidence="10">
    <original>LLANGGHGVEGSDTTGSPTEFLEEKMAYQEYPNSQNWPEDTNFCFQPEQVVDPIQTDPFKMYHDDDLADLVFPSSATADTSIFAGQNDPLKDSYGMSPCNTAVVPQGWSVEALNSPHSESFVSPEAVAEPPQPTAVPLE</original>
    <variation>METTGDQGIEGMAYMDENRNITFTCPRTPSELINKSSPLEVLGSAACEKLPTPTPQVVKEGDSFPDT</variation>
    <location>
        <begin position="83"/>
        <end position="221"/>
    </location>
</feature>
<feature type="splice variant" id="VSP_043240" description="In isoform 7." evidence="11">
    <original>GS</original>
    <variation>EA</variation>
    <location>
        <begin position="98"/>
        <end position="99"/>
    </location>
</feature>
<feature type="splice variant" id="VSP_043241" description="In isoform 7." evidence="11">
    <location>
        <begin position="100"/>
        <end position="1152"/>
    </location>
</feature>
<feature type="splice variant" id="VSP_032068" description="In isoform 3." evidence="10">
    <original>LVFPSSATADTSIFAGQNDPLKDSYGMSPCNTAVVPQGWSVEALNSPHSESFVSPEAVAEPPQPTAVPLELAKEIEMASEERPPAQALEIMMGLKTTDMAPSKETEMALAKDMALATKTEVALAKDMESPTKLDVTLAKDMQPSMESDMALVKDMELPTEKEVALVKDVRWPTETDVSSAKNVVLPTETEVAPAKDVTLLKETERASPIKMDLAPSKDMGPPKENKKETERASPIKMDLAPSKDMGPPKENKIVPAKDLVLLSEIEVAQANDIISSTEISSAEKVA</original>
    <variation>MSLSDKQTASLTAAYGQLSKGKPAECRMDSPKEISQAGFEWQRTEGKLNEIGLNVSMDGQPKDGLVKNASFLEQNKLCFFEGKLDKELSIEMQDKDCQEASGHLESRYVISETCHPLEGNSVHQKTSEFHLGLIEGPDKNKTIPVQGKVAGKNGLETKSQSDLDFPGAADIPTRYVKEQETSVWNPSFHPVAQGSLGSREATPGEMENSITPGCPVIGVVNDNSEQLKCESPLLVSLAHPAPIIEHSPTTIPPITMVFTQEHLNASCHIRDHDKELEK</variation>
    <location>
        <begin position="152"/>
        <end position="437"/>
    </location>
</feature>
<feature type="splice variant" id="VSP_032069" description="In isoform 4." evidence="10">
    <original>EIEMASEERPPAQALEIMMGLKTTDMAPSKETEMALAKDMALATKTE</original>
    <variation>NGQEIAPAQISKSLMVDNYTKDGVPGQERPKGPSAVVPSTSTGG</variation>
    <location>
        <begin position="225"/>
        <end position="271"/>
    </location>
</feature>
<feature type="splice variant" id="VSP_032070" description="In isoform 4." evidence="10">
    <original>AKDMESPTKLDVTLAKDMQPSMESDMALVKDMELPTEKEVALVKDVRWPTETDVSSAKNVVLPTETEVAPAKDVTLLKETERASPIKMDLAPSKDMGPPKENKKETERASPIKMDLAPSKDMGPPKENKIVPAKDLVLLSEIEVAQANDIISSTEISSAEKVALSSETEVALARDMTLPPETNVILTKDKALPLEAEVAPVKDMAQLPETEIAPAKDVAPSTVKEVGLLKDMSPLSETEMALGKDVTPPPETEVVLIKNVCLPPEMEVALTEDQVPALKTEAPLAKDGVLTLANNVTPAKDVPPLSETEATPVPIKDMEIAQTQKGISEDSHLESLQDVGQSAAPTFMISPETVTGTGKKCSLPAEEDSVLEKLGERKPCNSQPSELSSETS</original>
    <variation>PITTAIETVNIHGDHSLKNKAELADSMKNEAGIDEGHVIGESESVHSGASKHSVEKVTELAKGHLLPGVPVEDQSLPGEARALEGYADRGNFPAHPVNEEKETKEGSVAVQIPDLLEDKAQKLSFCEDQNAQDRNSKGSDSLNKKVDLTLLSPKSENDKLKEISLACKITELESVSLPTPEIQSDFLHSKVEAPPSEVADTLVIMTASKGVRLPEPKDKILETPQKMTEKSESKTPGEGKKEDKSRMAEPMKGYMRPTKSRGLTPLLPKSTIQEQERHKQLKSA</variation>
    <location>
        <begin position="275"/>
        <end position="666"/>
    </location>
</feature>
<feature type="splice variant" id="VSP_032071" description="In isoform 5." evidence="12">
    <original>WPTETDVSSAKNVVLPTETEVAPAKDVTLLKETERASPIKMDLAPSKDMGPPKENKKETERASPIKMDLAPSKDMGPPKENKIVPAKDLVLLSEIEVAQANDIISSTEISSAEKVALSSETEVALARDMTLPPETNVILTKDKALPLEAEVAPVKDMAQLPETEIAPAKDVAPSTVKEVGLLKDMSPLSETEMALGKDVTPPPETEVVLIKNVCLPPEMEVALTEDQVPALKTEAPLAKDGVLTLANNVTPAKDVPPLSETEATPVPIKDMEIAQTQKGISEDSHLESLQDVGQSAAPTFMISPETVTGTGKKCSLPAEEDSVLEKLGERKPCNSQPSELSSETS</original>
    <variation>LPEPKDKILETPQKMTEKSESKTPGEGKKEDKSRMAEPMKGYMRPTKSRGLTPLLPKSTIQEQERHKQLKSA</variation>
    <location>
        <begin position="322"/>
        <end position="666"/>
    </location>
</feature>
<feature type="splice variant" id="VSP_032072" description="In isoform 3." evidence="10">
    <original>ETEVALARDMTLPPETNVILTKDKALPLEAEVAPVKDMAQLPETEIAPAKDVAPSTVKEVGLLKDMSPLSETEMALGKDVTPPPETEVVLIKNVCLPPEMEVALTEDQVPALKTEAPLAKDGVLTLANNVTPAKDVPPLSETEATPVPIKDMEIAQTQKGISEDSHLESLQDVGQSAAPTFMISPETVTGT</original>
    <variation>TEEAVLNQAPQQKKAVRRALSECSHLSVPPAVNLADKYPELPAREEPSSGLLPPPSSPMPSPTPGKLGAPAMKRSMTVGEEQTASYKLSPGKLPILSTKEIPPFICEEPVAKKREELAHFSNSSSNSGKKELGTAGLYLHSKLEQIPEGSSKEKGQEDFSETRIDSCSQVCQRGEKQPGQTALA</variation>
    <location>
        <begin position="441"/>
        <end position="631"/>
    </location>
</feature>
<feature type="splice variant" id="VSP_003200" description="In isoform 2." evidence="11">
    <location>
        <begin position="558"/>
        <end position="730"/>
    </location>
</feature>
<feature type="splice variant" id="VSP_032073" description="In isoform 3." evidence="10">
    <original>CSLPAEEDSVLEKLGERKPCNSQPSELSSETS</original>
    <variation>EIEVTATQSTPSFLFEKPPRD</variation>
    <location>
        <begin position="635"/>
        <end position="666"/>
    </location>
</feature>
<feature type="splice variant" id="VSP_032074" description="In isoform 3." evidence="10">
    <original>PLATTQPAKTSTSK</original>
    <variation>VGARMVVIFYCHNF</variation>
    <location>
        <begin position="703"/>
        <end position="716"/>
    </location>
</feature>
<feature type="splice variant" id="VSP_032075" description="In isoform 3." evidence="10">
    <location>
        <begin position="717"/>
        <end position="1152"/>
    </location>
</feature>
<feature type="splice variant" id="VSP_032076" description="In isoform 4." evidence="10">
    <location>
        <begin position="939"/>
        <end position="953"/>
    </location>
</feature>
<feature type="splice variant" id="VSP_032077" description="In isoform 5." evidence="12">
    <location>
        <begin position="954"/>
        <end position="1022"/>
    </location>
</feature>
<feature type="splice variant" id="VSP_032078" description="In isoform 6." evidence="13">
    <original>TEGGGSEAPLCPGPPAGEEPAISEAAPEAGAPTSASGLNGHPTLSGGGDQREAQTLDSQIQETSI</original>
    <variation>IETYRLTFRANARARTDHGADIVSRPPHFPGGPNSGSRVLGPLSRAVH</variation>
    <location>
        <begin position="1088"/>
        <end position="1152"/>
    </location>
</feature>
<feature type="splice variant" id="VSP_032079" description="In isoform 5." evidence="12">
    <original>SI</original>
    <variation>N</variation>
    <location>
        <begin position="1151"/>
        <end position="1152"/>
    </location>
</feature>
<feature type="sequence variant" id="VAR_039566" description="In dbSNP:rs11711953.">
    <original>R</original>
    <variation>Q</variation>
    <location>
        <position position="23"/>
    </location>
</feature>
<feature type="sequence variant" id="VAR_039567" description="In dbSNP:rs13097415.">
    <original>P</original>
    <variation>L</variation>
    <location>
        <position position="366"/>
    </location>
</feature>
<feature type="sequence variant" id="VAR_039568" description="In dbSNP:rs13096947.">
    <original>S</original>
    <variation>P</variation>
    <location>
        <position position="367"/>
    </location>
</feature>
<feature type="sequence variant" id="VAR_039569" description="In dbSNP:rs13076542.">
    <original>D</original>
    <variation>G</variation>
    <location>
        <position position="409"/>
    </location>
</feature>
<feature type="sequence variant" id="VAR_020361" description="In dbSNP:rs1060407." evidence="6">
    <original>S</original>
    <variation>Y</variation>
    <location>
        <position position="427"/>
    </location>
</feature>
<feature type="sequence variant" id="VAR_020362" description="In dbSNP:rs2230169.">
    <original>E</original>
    <variation>Q</variation>
    <location>
        <position position="441"/>
    </location>
</feature>
<feature type="sequence variant" id="VAR_039570" description="In dbSNP:rs1137524." evidence="6 20 23">
    <original>V</original>
    <variation>I</variation>
    <location>
        <position position="628"/>
    </location>
</feature>
<feature type="sequence variant" id="VAR_039571" description="In dbSNP:rs35736893.">
    <original>I</original>
    <variation>V</variation>
    <location>
        <position position="994"/>
    </location>
</feature>
<feature type="mutagenesis site" description="No change in microtubule binding; no change in microtubule polymerization activity." evidence="4">
    <original>S</original>
    <variation>E</variation>
    <location>
        <position position="696"/>
    </location>
</feature>
<feature type="mutagenesis site" description="No change in microtubule binding; reduced microtubule polymerization activity." evidence="4">
    <original>S</original>
    <variation>E</variation>
    <location>
        <position position="787"/>
    </location>
</feature>
<feature type="sequence conflict" description="In Ref. 1; AAA59553." evidence="14" ref="1">
    <original>A</original>
    <variation>R</variation>
    <location>
        <position position="160"/>
    </location>
</feature>
<feature type="sequence conflict" description="In Ref. 10; CAH18346." evidence="14" ref="10">
    <original>D</original>
    <variation>G</variation>
    <location>
        <position position="319"/>
    </location>
</feature>
<feature type="sequence conflict" description="In Ref. 10; CAH18346." evidence="14" ref="10">
    <original>I</original>
    <variation>V</variation>
    <location>
        <position position="1109"/>
    </location>
</feature>
<feature type="modified residue" description="Phosphoserine" evidence="17">
    <location sequence="P27816-3">
        <position position="337"/>
    </location>
</feature>
<feature type="modified residue" description="Phosphoserine" evidence="17">
    <location sequence="P27816-3">
        <position position="338"/>
    </location>
</feature>
<feature type="modified residue" description="Phosphothreonine" evidence="20">
    <location sequence="P27816-4">
        <position position="28"/>
    </location>
</feature>
<feature type="modified residue" description="Phosphoserine" evidence="16 20 23">
    <location sequence="P27816-4">
        <position position="269"/>
    </location>
</feature>
<feature type="modified residue" description="Phosphoserine" evidence="24">
    <location sequence="P27816-5">
        <position position="803"/>
    </location>
</feature>
<name>MAP4_HUMAN</name>
<protein>
    <recommendedName>
        <fullName>Microtubule-associated protein 4</fullName>
        <shortName>MAP-4</shortName>
    </recommendedName>
</protein>
<keyword id="KW-0007">Acetylation</keyword>
<keyword id="KW-0025">Alternative splicing</keyword>
<keyword id="KW-0963">Cytoplasm</keyword>
<keyword id="KW-0206">Cytoskeleton</keyword>
<keyword id="KW-0903">Direct protein sequencing</keyword>
<keyword id="KW-1017">Isopeptide bond</keyword>
<keyword id="KW-0493">Microtubule</keyword>
<keyword id="KW-0597">Phosphoprotein</keyword>
<keyword id="KW-1267">Proteomics identification</keyword>
<keyword id="KW-1185">Reference proteome</keyword>
<keyword id="KW-0677">Repeat</keyword>
<keyword id="KW-0832">Ubl conjugation</keyword>
<accession>P27816</accession>
<accession>Q13082</accession>
<accession>Q59FT2</accession>
<accession>Q68D74</accession>
<accession>Q6ZUW9</accession>
<accession>Q86V26</accession>
<accession>Q96A76</accession>
<accession>Q96NS9</accession>
<comment type="function">
    <text evidence="4 8">Non-neuronal microtubule-associated protein. Promotes microtubule assembly.</text>
</comment>
<comment type="subunit">
    <text evidence="2 5 7">Interacts with SEPTIN2; this interaction impedes tubulin-binding. Interacts with TRAF3IP1 (By similarity). Interacts with KNSTRN (PubMed:29180244).</text>
</comment>
<comment type="interaction">
    <interactant intactId="EBI-715255">
        <id>P27816</id>
    </interactant>
    <interactant intactId="EBI-1542113">
        <id>P07384</id>
        <label>CAPN1</label>
    </interactant>
    <organismsDiffer>false</organismsDiffer>
    <experiments>2</experiments>
</comment>
<comment type="interaction">
    <interactant intactId="EBI-715255">
        <id>P27816</id>
    </interactant>
    <interactant intactId="EBI-389883">
        <id>P16333</id>
        <label>NCK1</label>
    </interactant>
    <organismsDiffer>false</organismsDiffer>
    <experiments>2</experiments>
</comment>
<comment type="subcellular location">
    <subcellularLocation>
        <location evidence="8">Cytoplasm</location>
        <location evidence="8">Cytoskeleton</location>
    </subcellularLocation>
    <subcellularLocation>
        <location evidence="7">Cytoplasm</location>
        <location evidence="7">Cytoskeleton</location>
        <location evidence="7">Microtubule organizing center</location>
    </subcellularLocation>
    <text evidence="8">Recruitment to microtubule is inhibited by microtubules polyglutamylation.</text>
</comment>
<comment type="alternative products">
    <event type="alternative splicing"/>
    <isoform>
        <id>P27816-1</id>
        <name>1</name>
        <sequence type="displayed"/>
    </isoform>
    <isoform>
        <id>P27816-2</id>
        <name>2</name>
        <sequence type="described" ref="VSP_003200"/>
    </isoform>
    <isoform>
        <id>P27816-3</id>
        <name>3</name>
        <sequence type="described" ref="VSP_032065 VSP_032068 VSP_032072 VSP_032073 VSP_032074 VSP_032075"/>
    </isoform>
    <isoform>
        <id>P27816-4</id>
        <name>4</name>
        <sequence type="described" ref="VSP_032066 VSP_032067 VSP_032069 VSP_032070 VSP_032076"/>
    </isoform>
    <isoform>
        <id>P27816-5</id>
        <name>5</name>
        <sequence type="described" ref="VSP_032071 VSP_032077 VSP_032079"/>
    </isoform>
    <isoform>
        <id>P27816-6</id>
        <name>6</name>
        <sequence type="described" ref="VSP_032078"/>
    </isoform>
    <isoform>
        <id>P27816-7</id>
        <name>7</name>
        <sequence type="described" ref="VSP_043240 VSP_043241"/>
    </isoform>
    <text>Additional isoforms seem to exist.</text>
</comment>
<comment type="PTM">
    <text evidence="1 4">Phosphorylated at serine residues in K-X-G-S motifs by MAP/microtubule affinity-regulating kinase (MARK1 or MARK2), causing detachment from microtubules, and their disassembly (By similarity). Phosphorylation on Ser-787 negatively regulates MAP4 activity to promote microtubule assembly. Isoform 3 is phosphorylated on Ser-337 and Ser-338.</text>
</comment>
<comment type="miscellaneous">
    <molecule>Isoform 2</molecule>
    <text evidence="14">May be produced at very low levels due to a premature stop codon in the mRNA, leading to nonsense-mediated mRNA decay.</text>
</comment>
<comment type="sequence caution" evidence="14">
    <conflict type="erroneous initiation">
        <sequence resource="EMBL-CDS" id="BAD92614"/>
    </conflict>
    <text>Extended N-terminus.</text>
</comment>
<comment type="online information" name="Atlas of Genetics and Cytogenetics in Oncology and Haematology">
    <link uri="https://atlasgeneticsoncology.org/gene/44410/MAP4"/>
</comment>
<gene>
    <name type="primary">MAP4</name>
</gene>
<organism>
    <name type="scientific">Homo sapiens</name>
    <name type="common">Human</name>
    <dbReference type="NCBI Taxonomy" id="9606"/>
    <lineage>
        <taxon>Eukaryota</taxon>
        <taxon>Metazoa</taxon>
        <taxon>Chordata</taxon>
        <taxon>Craniata</taxon>
        <taxon>Vertebrata</taxon>
        <taxon>Euteleostomi</taxon>
        <taxon>Mammalia</taxon>
        <taxon>Eutheria</taxon>
        <taxon>Euarchontoglires</taxon>
        <taxon>Primates</taxon>
        <taxon>Haplorrhini</taxon>
        <taxon>Catarrhini</taxon>
        <taxon>Hominidae</taxon>
        <taxon>Homo</taxon>
    </lineage>
</organism>